<sequence length="118" mass="12991">MKFQPLGERVLVERLEEENKTSSGIIIPDNAKEKPLMGVVKAVSHKISEGCKCVKEGDVIAFGKYKGAEIVLDGTEYMVLELEDILGIVGSGSCCHTGNHDHKHAKEHEACCHDHKKH</sequence>
<evidence type="ECO:0000255" key="1">
    <source>
        <dbReference type="HAMAP-Rule" id="MF_00580"/>
    </source>
</evidence>
<accession>Q1CVE4</accession>
<keyword id="KW-0143">Chaperone</keyword>
<keyword id="KW-0963">Cytoplasm</keyword>
<dbReference type="EMBL" id="CP000241">
    <property type="protein sequence ID" value="ABF84078.1"/>
    <property type="molecule type" value="Genomic_DNA"/>
</dbReference>
<dbReference type="RefSeq" id="WP_000671934.1">
    <property type="nucleotide sequence ID" value="NC_008086.1"/>
</dbReference>
<dbReference type="SMR" id="Q1CVE4"/>
<dbReference type="KEGG" id="hpa:HPAG1_0011"/>
<dbReference type="HOGENOM" id="CLU_132825_2_0_7"/>
<dbReference type="GO" id="GO:0005737">
    <property type="term" value="C:cytoplasm"/>
    <property type="evidence" value="ECO:0007669"/>
    <property type="project" value="UniProtKB-SubCell"/>
</dbReference>
<dbReference type="GO" id="GO:0005524">
    <property type="term" value="F:ATP binding"/>
    <property type="evidence" value="ECO:0007669"/>
    <property type="project" value="InterPro"/>
</dbReference>
<dbReference type="GO" id="GO:0046872">
    <property type="term" value="F:metal ion binding"/>
    <property type="evidence" value="ECO:0007669"/>
    <property type="project" value="TreeGrafter"/>
</dbReference>
<dbReference type="GO" id="GO:0044183">
    <property type="term" value="F:protein folding chaperone"/>
    <property type="evidence" value="ECO:0007669"/>
    <property type="project" value="InterPro"/>
</dbReference>
<dbReference type="GO" id="GO:0051087">
    <property type="term" value="F:protein-folding chaperone binding"/>
    <property type="evidence" value="ECO:0007669"/>
    <property type="project" value="TreeGrafter"/>
</dbReference>
<dbReference type="GO" id="GO:0051082">
    <property type="term" value="F:unfolded protein binding"/>
    <property type="evidence" value="ECO:0007669"/>
    <property type="project" value="TreeGrafter"/>
</dbReference>
<dbReference type="GO" id="GO:0051085">
    <property type="term" value="P:chaperone cofactor-dependent protein refolding"/>
    <property type="evidence" value="ECO:0007669"/>
    <property type="project" value="TreeGrafter"/>
</dbReference>
<dbReference type="CDD" id="cd00320">
    <property type="entry name" value="cpn10"/>
    <property type="match status" value="1"/>
</dbReference>
<dbReference type="FunFam" id="2.30.33.40:FF:000009">
    <property type="entry name" value="10 kDa chaperonin"/>
    <property type="match status" value="1"/>
</dbReference>
<dbReference type="Gene3D" id="2.30.33.40">
    <property type="entry name" value="GroES chaperonin"/>
    <property type="match status" value="1"/>
</dbReference>
<dbReference type="HAMAP" id="MF_00580">
    <property type="entry name" value="CH10"/>
    <property type="match status" value="1"/>
</dbReference>
<dbReference type="InterPro" id="IPR020818">
    <property type="entry name" value="Chaperonin_GroES"/>
</dbReference>
<dbReference type="InterPro" id="IPR037124">
    <property type="entry name" value="Chaperonin_GroES_sf"/>
</dbReference>
<dbReference type="InterPro" id="IPR018369">
    <property type="entry name" value="Chaprnonin_Cpn10_CS"/>
</dbReference>
<dbReference type="InterPro" id="IPR011032">
    <property type="entry name" value="GroES-like_sf"/>
</dbReference>
<dbReference type="NCBIfam" id="NF001535">
    <property type="entry name" value="PRK00364.3-1"/>
    <property type="match status" value="1"/>
</dbReference>
<dbReference type="NCBIfam" id="NF001537">
    <property type="entry name" value="PRK00364.3-3"/>
    <property type="match status" value="1"/>
</dbReference>
<dbReference type="PANTHER" id="PTHR10772">
    <property type="entry name" value="10 KDA HEAT SHOCK PROTEIN"/>
    <property type="match status" value="1"/>
</dbReference>
<dbReference type="PANTHER" id="PTHR10772:SF58">
    <property type="entry name" value="CO-CHAPERONIN GROES"/>
    <property type="match status" value="1"/>
</dbReference>
<dbReference type="Pfam" id="PF00166">
    <property type="entry name" value="Cpn10"/>
    <property type="match status" value="1"/>
</dbReference>
<dbReference type="PRINTS" id="PR00297">
    <property type="entry name" value="CHAPERONIN10"/>
</dbReference>
<dbReference type="SMART" id="SM00883">
    <property type="entry name" value="Cpn10"/>
    <property type="match status" value="1"/>
</dbReference>
<dbReference type="SUPFAM" id="SSF50129">
    <property type="entry name" value="GroES-like"/>
    <property type="match status" value="1"/>
</dbReference>
<dbReference type="PROSITE" id="PS00681">
    <property type="entry name" value="CHAPERONINS_CPN10"/>
    <property type="match status" value="1"/>
</dbReference>
<reference key="1">
    <citation type="journal article" date="2006" name="Proc. Natl. Acad. Sci. U.S.A.">
        <title>The complete genome sequence of a chronic atrophic gastritis Helicobacter pylori strain: evolution during disease progression.</title>
        <authorList>
            <person name="Oh J.D."/>
            <person name="Kling-Baeckhed H."/>
            <person name="Giannakis M."/>
            <person name="Xu J."/>
            <person name="Fulton R.S."/>
            <person name="Fulton L.A."/>
            <person name="Cordum H.S."/>
            <person name="Wang C."/>
            <person name="Elliott G."/>
            <person name="Edwards J."/>
            <person name="Mardis E.R."/>
            <person name="Engstrand L.G."/>
            <person name="Gordon J.I."/>
        </authorList>
    </citation>
    <scope>NUCLEOTIDE SEQUENCE [LARGE SCALE GENOMIC DNA]</scope>
    <source>
        <strain>HPAG1</strain>
    </source>
</reference>
<gene>
    <name evidence="1" type="primary">groES</name>
    <name evidence="1" type="synonym">groS</name>
    <name type="ordered locus">HPAG1_0011</name>
</gene>
<protein>
    <recommendedName>
        <fullName evidence="1">Co-chaperonin GroES</fullName>
    </recommendedName>
    <alternativeName>
        <fullName evidence="1">10 kDa chaperonin</fullName>
    </alternativeName>
    <alternativeName>
        <fullName evidence="1">Chaperonin-10</fullName>
        <shortName evidence="1">Cpn10</shortName>
    </alternativeName>
</protein>
<comment type="function">
    <text evidence="1">Together with the chaperonin GroEL, plays an essential role in assisting protein folding. The GroEL-GroES system forms a nano-cage that allows encapsulation of the non-native substrate proteins and provides a physical environment optimized to promote and accelerate protein folding. GroES binds to the apical surface of the GroEL ring, thereby capping the opening of the GroEL channel.</text>
</comment>
<comment type="subunit">
    <text evidence="1">Heptamer of 7 subunits arranged in a ring. Interacts with the chaperonin GroEL.</text>
</comment>
<comment type="subcellular location">
    <subcellularLocation>
        <location evidence="1">Cytoplasm</location>
    </subcellularLocation>
</comment>
<comment type="similarity">
    <text evidence="1">Belongs to the GroES chaperonin family.</text>
</comment>
<name>CH10_HELPH</name>
<organism>
    <name type="scientific">Helicobacter pylori (strain HPAG1)</name>
    <dbReference type="NCBI Taxonomy" id="357544"/>
    <lineage>
        <taxon>Bacteria</taxon>
        <taxon>Pseudomonadati</taxon>
        <taxon>Campylobacterota</taxon>
        <taxon>Epsilonproteobacteria</taxon>
        <taxon>Campylobacterales</taxon>
        <taxon>Helicobacteraceae</taxon>
        <taxon>Helicobacter</taxon>
    </lineage>
</organism>
<proteinExistence type="inferred from homology"/>
<feature type="chain" id="PRO_1000025273" description="Co-chaperonin GroES">
    <location>
        <begin position="1"/>
        <end position="118"/>
    </location>
</feature>